<feature type="chain" id="PRO_0000129184" description="Large ribosomal subunit protein uL4">
    <location>
        <begin position="1"/>
        <end position="208"/>
    </location>
</feature>
<feature type="region of interest" description="Disordered" evidence="2">
    <location>
        <begin position="44"/>
        <end position="79"/>
    </location>
</feature>
<gene>
    <name evidence="1" type="primary">rplD</name>
    <name type="ordered locus">BT_2726</name>
</gene>
<keyword id="KW-1185">Reference proteome</keyword>
<keyword id="KW-0687">Ribonucleoprotein</keyword>
<keyword id="KW-0689">Ribosomal protein</keyword>
<keyword id="KW-0694">RNA-binding</keyword>
<keyword id="KW-0699">rRNA-binding</keyword>
<organism>
    <name type="scientific">Bacteroides thetaiotaomicron (strain ATCC 29148 / DSM 2079 / JCM 5827 / CCUG 10774 / NCTC 10582 / VPI-5482 / E50)</name>
    <dbReference type="NCBI Taxonomy" id="226186"/>
    <lineage>
        <taxon>Bacteria</taxon>
        <taxon>Pseudomonadati</taxon>
        <taxon>Bacteroidota</taxon>
        <taxon>Bacteroidia</taxon>
        <taxon>Bacteroidales</taxon>
        <taxon>Bacteroidaceae</taxon>
        <taxon>Bacteroides</taxon>
    </lineage>
</organism>
<sequence length="208" mass="23013">MEVNVYNIKGEDTGRKVTLNESIFGIEPNDHAIYLDVKQFMANQRQGTHKSKERSEISGSTRKIGRQKGGGGARRGDMNSPVLVGGARVFGPKPRDYFFKLNKKVKTLARKSALSYKVQNNALIVVEDFVFEAPKTKDFVAMTKNLKVSDKKLLVILPEANKNVYLSARNIEGANVQTVSGLNTYRVLNAGVVVLTENSLKAIDNILI</sequence>
<proteinExistence type="inferred from homology"/>
<reference key="1">
    <citation type="journal article" date="2003" name="Science">
        <title>A genomic view of the human-Bacteroides thetaiotaomicron symbiosis.</title>
        <authorList>
            <person name="Xu J."/>
            <person name="Bjursell M.K."/>
            <person name="Himrod J."/>
            <person name="Deng S."/>
            <person name="Carmichael L.K."/>
            <person name="Chiang H.C."/>
            <person name="Hooper L.V."/>
            <person name="Gordon J.I."/>
        </authorList>
    </citation>
    <scope>NUCLEOTIDE SEQUENCE [LARGE SCALE GENOMIC DNA]</scope>
    <source>
        <strain>ATCC 29148 / DSM 2079 / JCM 5827 / CCUG 10774 / NCTC 10582 / VPI-5482 / E50</strain>
    </source>
</reference>
<accession>Q8A477</accession>
<evidence type="ECO:0000255" key="1">
    <source>
        <dbReference type="HAMAP-Rule" id="MF_01328"/>
    </source>
</evidence>
<evidence type="ECO:0000256" key="2">
    <source>
        <dbReference type="SAM" id="MobiDB-lite"/>
    </source>
</evidence>
<evidence type="ECO:0000305" key="3"/>
<name>RL4_BACTN</name>
<comment type="function">
    <text evidence="1">One of the primary rRNA binding proteins, this protein initially binds near the 5'-end of the 23S rRNA. It is important during the early stages of 50S assembly. It makes multiple contacts with different domains of the 23S rRNA in the assembled 50S subunit and ribosome.</text>
</comment>
<comment type="function">
    <text evidence="1">Forms part of the polypeptide exit tunnel.</text>
</comment>
<comment type="subunit">
    <text evidence="1">Part of the 50S ribosomal subunit.</text>
</comment>
<comment type="similarity">
    <text evidence="1">Belongs to the universal ribosomal protein uL4 family.</text>
</comment>
<protein>
    <recommendedName>
        <fullName evidence="1">Large ribosomal subunit protein uL4</fullName>
    </recommendedName>
    <alternativeName>
        <fullName evidence="3">50S ribosomal protein L4</fullName>
    </alternativeName>
</protein>
<dbReference type="EMBL" id="AE015928">
    <property type="protein sequence ID" value="AAO77832.1"/>
    <property type="molecule type" value="Genomic_DNA"/>
</dbReference>
<dbReference type="RefSeq" id="NP_811638.1">
    <property type="nucleotide sequence ID" value="NC_004663.1"/>
</dbReference>
<dbReference type="RefSeq" id="WP_008762035.1">
    <property type="nucleotide sequence ID" value="NZ_UYXG01000001.1"/>
</dbReference>
<dbReference type="SMR" id="Q8A477"/>
<dbReference type="FunCoup" id="Q8A477">
    <property type="interactions" value="677"/>
</dbReference>
<dbReference type="STRING" id="226186.BT_2726"/>
<dbReference type="PaxDb" id="226186-BT_2726"/>
<dbReference type="EnsemblBacteria" id="AAO77832">
    <property type="protein sequence ID" value="AAO77832"/>
    <property type="gene ID" value="BT_2726"/>
</dbReference>
<dbReference type="GeneID" id="69587586"/>
<dbReference type="KEGG" id="bth:BT_2726"/>
<dbReference type="PATRIC" id="fig|226186.12.peg.2769"/>
<dbReference type="eggNOG" id="COG0088">
    <property type="taxonomic scope" value="Bacteria"/>
</dbReference>
<dbReference type="HOGENOM" id="CLU_041575_5_2_10"/>
<dbReference type="InParanoid" id="Q8A477"/>
<dbReference type="OrthoDB" id="9803201at2"/>
<dbReference type="Proteomes" id="UP000001414">
    <property type="component" value="Chromosome"/>
</dbReference>
<dbReference type="GO" id="GO:1990904">
    <property type="term" value="C:ribonucleoprotein complex"/>
    <property type="evidence" value="ECO:0007669"/>
    <property type="project" value="UniProtKB-KW"/>
</dbReference>
<dbReference type="GO" id="GO:0005840">
    <property type="term" value="C:ribosome"/>
    <property type="evidence" value="ECO:0007669"/>
    <property type="project" value="UniProtKB-KW"/>
</dbReference>
<dbReference type="GO" id="GO:0019843">
    <property type="term" value="F:rRNA binding"/>
    <property type="evidence" value="ECO:0007669"/>
    <property type="project" value="UniProtKB-UniRule"/>
</dbReference>
<dbReference type="GO" id="GO:0003735">
    <property type="term" value="F:structural constituent of ribosome"/>
    <property type="evidence" value="ECO:0000318"/>
    <property type="project" value="GO_Central"/>
</dbReference>
<dbReference type="GO" id="GO:0006412">
    <property type="term" value="P:translation"/>
    <property type="evidence" value="ECO:0007669"/>
    <property type="project" value="UniProtKB-UniRule"/>
</dbReference>
<dbReference type="FunFam" id="3.40.1370.10:FF:000009">
    <property type="entry name" value="50S ribosomal protein L4"/>
    <property type="match status" value="1"/>
</dbReference>
<dbReference type="Gene3D" id="3.40.1370.10">
    <property type="match status" value="1"/>
</dbReference>
<dbReference type="HAMAP" id="MF_01328_B">
    <property type="entry name" value="Ribosomal_uL4_B"/>
    <property type="match status" value="1"/>
</dbReference>
<dbReference type="InterPro" id="IPR002136">
    <property type="entry name" value="Ribosomal_uL4"/>
</dbReference>
<dbReference type="InterPro" id="IPR013005">
    <property type="entry name" value="Ribosomal_uL4-like"/>
</dbReference>
<dbReference type="InterPro" id="IPR023574">
    <property type="entry name" value="Ribosomal_uL4_dom_sf"/>
</dbReference>
<dbReference type="NCBIfam" id="TIGR03953">
    <property type="entry name" value="rplD_bact"/>
    <property type="match status" value="1"/>
</dbReference>
<dbReference type="PANTHER" id="PTHR10746">
    <property type="entry name" value="50S RIBOSOMAL PROTEIN L4"/>
    <property type="match status" value="1"/>
</dbReference>
<dbReference type="PANTHER" id="PTHR10746:SF6">
    <property type="entry name" value="LARGE RIBOSOMAL SUBUNIT PROTEIN UL4M"/>
    <property type="match status" value="1"/>
</dbReference>
<dbReference type="Pfam" id="PF00573">
    <property type="entry name" value="Ribosomal_L4"/>
    <property type="match status" value="1"/>
</dbReference>
<dbReference type="SUPFAM" id="SSF52166">
    <property type="entry name" value="Ribosomal protein L4"/>
    <property type="match status" value="1"/>
</dbReference>